<keyword id="KW-0963">Cytoplasm</keyword>
<keyword id="KW-0255">Endonuclease</keyword>
<keyword id="KW-0378">Hydrolase</keyword>
<keyword id="KW-0460">Magnesium</keyword>
<keyword id="KW-0479">Metal-binding</keyword>
<keyword id="KW-0507">mRNA processing</keyword>
<keyword id="KW-0540">Nuclease</keyword>
<keyword id="KW-1185">Reference proteome</keyword>
<keyword id="KW-0694">RNA-binding</keyword>
<keyword id="KW-0698">rRNA processing</keyword>
<keyword id="KW-0699">rRNA-binding</keyword>
<keyword id="KW-0819">tRNA processing</keyword>
<proteinExistence type="inferred from homology"/>
<accession>B9DRH1</accession>
<reference key="1">
    <citation type="journal article" date="2009" name="BMC Genomics">
        <title>Evidence for niche adaptation in the genome of the bovine pathogen Streptococcus uberis.</title>
        <authorList>
            <person name="Ward P.N."/>
            <person name="Holden M.T.G."/>
            <person name="Leigh J.A."/>
            <person name="Lennard N."/>
            <person name="Bignell A."/>
            <person name="Barron A."/>
            <person name="Clark L."/>
            <person name="Quail M.A."/>
            <person name="Woodward J."/>
            <person name="Barrell B.G."/>
            <person name="Egan S.A."/>
            <person name="Field T.R."/>
            <person name="Maskell D."/>
            <person name="Kehoe M."/>
            <person name="Dowson C.G."/>
            <person name="Chanter N."/>
            <person name="Whatmore A.M."/>
            <person name="Bentley S.D."/>
            <person name="Parkhill J."/>
        </authorList>
    </citation>
    <scope>NUCLEOTIDE SEQUENCE [LARGE SCALE GENOMIC DNA]</scope>
    <source>
        <strain>ATCC BAA-854 / 0140J</strain>
    </source>
</reference>
<evidence type="ECO:0000255" key="1">
    <source>
        <dbReference type="HAMAP-Rule" id="MF_00104"/>
    </source>
</evidence>
<protein>
    <recommendedName>
        <fullName evidence="1">Ribonuclease 3</fullName>
        <ecNumber evidence="1">3.1.26.3</ecNumber>
    </recommendedName>
    <alternativeName>
        <fullName evidence="1">Ribonuclease III</fullName>
        <shortName evidence="1">RNase III</shortName>
    </alternativeName>
</protein>
<gene>
    <name evidence="1" type="primary">rnc</name>
    <name type="ordered locus">SUB0555</name>
</gene>
<feature type="chain" id="PRO_1000118936" description="Ribonuclease 3">
    <location>
        <begin position="1"/>
        <end position="230"/>
    </location>
</feature>
<feature type="domain" description="RNase III" evidence="1">
    <location>
        <begin position="5"/>
        <end position="134"/>
    </location>
</feature>
<feature type="domain" description="DRBM" evidence="1">
    <location>
        <begin position="160"/>
        <end position="229"/>
    </location>
</feature>
<feature type="active site" evidence="1">
    <location>
        <position position="51"/>
    </location>
</feature>
<feature type="active site" evidence="1">
    <location>
        <position position="123"/>
    </location>
</feature>
<feature type="binding site" evidence="1">
    <location>
        <position position="47"/>
    </location>
    <ligand>
        <name>Mg(2+)</name>
        <dbReference type="ChEBI" id="CHEBI:18420"/>
    </ligand>
</feature>
<feature type="binding site" evidence="1">
    <location>
        <position position="120"/>
    </location>
    <ligand>
        <name>Mg(2+)</name>
        <dbReference type="ChEBI" id="CHEBI:18420"/>
    </ligand>
</feature>
<feature type="binding site" evidence="1">
    <location>
        <position position="123"/>
    </location>
    <ligand>
        <name>Mg(2+)</name>
        <dbReference type="ChEBI" id="CHEBI:18420"/>
    </ligand>
</feature>
<comment type="function">
    <text evidence="1">Digests double-stranded RNA. Involved in the processing of primary rRNA transcript to yield the immediate precursors to the large and small rRNAs (23S and 16S). Processes some mRNAs, and tRNAs when they are encoded in the rRNA operon. Processes pre-crRNA and tracrRNA of type II CRISPR loci if present in the organism.</text>
</comment>
<comment type="catalytic activity">
    <reaction evidence="1">
        <text>Endonucleolytic cleavage to 5'-phosphomonoester.</text>
        <dbReference type="EC" id="3.1.26.3"/>
    </reaction>
</comment>
<comment type="cofactor">
    <cofactor evidence="1">
        <name>Mg(2+)</name>
        <dbReference type="ChEBI" id="CHEBI:18420"/>
    </cofactor>
</comment>
<comment type="subunit">
    <text evidence="1">Homodimer.</text>
</comment>
<comment type="subcellular location">
    <subcellularLocation>
        <location evidence="1">Cytoplasm</location>
    </subcellularLocation>
</comment>
<comment type="similarity">
    <text evidence="1">Belongs to the ribonuclease III family.</text>
</comment>
<dbReference type="EC" id="3.1.26.3" evidence="1"/>
<dbReference type="EMBL" id="AM946015">
    <property type="protein sequence ID" value="CAR41327.1"/>
    <property type="molecule type" value="Genomic_DNA"/>
</dbReference>
<dbReference type="RefSeq" id="WP_012658080.1">
    <property type="nucleotide sequence ID" value="NC_012004.1"/>
</dbReference>
<dbReference type="SMR" id="B9DRH1"/>
<dbReference type="STRING" id="218495.SUB0555"/>
<dbReference type="GeneID" id="93825845"/>
<dbReference type="KEGG" id="sub:SUB0555"/>
<dbReference type="eggNOG" id="COG0571">
    <property type="taxonomic scope" value="Bacteria"/>
</dbReference>
<dbReference type="HOGENOM" id="CLU_000907_1_3_9"/>
<dbReference type="OrthoDB" id="9805026at2"/>
<dbReference type="Proteomes" id="UP000000449">
    <property type="component" value="Chromosome"/>
</dbReference>
<dbReference type="GO" id="GO:0005737">
    <property type="term" value="C:cytoplasm"/>
    <property type="evidence" value="ECO:0007669"/>
    <property type="project" value="UniProtKB-SubCell"/>
</dbReference>
<dbReference type="GO" id="GO:0003725">
    <property type="term" value="F:double-stranded RNA binding"/>
    <property type="evidence" value="ECO:0007669"/>
    <property type="project" value="TreeGrafter"/>
</dbReference>
<dbReference type="GO" id="GO:0046872">
    <property type="term" value="F:metal ion binding"/>
    <property type="evidence" value="ECO:0007669"/>
    <property type="project" value="UniProtKB-KW"/>
</dbReference>
<dbReference type="GO" id="GO:0004525">
    <property type="term" value="F:ribonuclease III activity"/>
    <property type="evidence" value="ECO:0007669"/>
    <property type="project" value="UniProtKB-UniRule"/>
</dbReference>
<dbReference type="GO" id="GO:0019843">
    <property type="term" value="F:rRNA binding"/>
    <property type="evidence" value="ECO:0007669"/>
    <property type="project" value="UniProtKB-KW"/>
</dbReference>
<dbReference type="GO" id="GO:0006397">
    <property type="term" value="P:mRNA processing"/>
    <property type="evidence" value="ECO:0007669"/>
    <property type="project" value="UniProtKB-UniRule"/>
</dbReference>
<dbReference type="GO" id="GO:0010468">
    <property type="term" value="P:regulation of gene expression"/>
    <property type="evidence" value="ECO:0007669"/>
    <property type="project" value="TreeGrafter"/>
</dbReference>
<dbReference type="GO" id="GO:0006364">
    <property type="term" value="P:rRNA processing"/>
    <property type="evidence" value="ECO:0007669"/>
    <property type="project" value="UniProtKB-UniRule"/>
</dbReference>
<dbReference type="GO" id="GO:0008033">
    <property type="term" value="P:tRNA processing"/>
    <property type="evidence" value="ECO:0007669"/>
    <property type="project" value="UniProtKB-KW"/>
</dbReference>
<dbReference type="CDD" id="cd10845">
    <property type="entry name" value="DSRM_RNAse_III_family"/>
    <property type="match status" value="1"/>
</dbReference>
<dbReference type="CDD" id="cd00593">
    <property type="entry name" value="RIBOc"/>
    <property type="match status" value="1"/>
</dbReference>
<dbReference type="FunFam" id="1.10.1520.10:FF:000001">
    <property type="entry name" value="Ribonuclease 3"/>
    <property type="match status" value="1"/>
</dbReference>
<dbReference type="FunFam" id="3.30.160.20:FF:000003">
    <property type="entry name" value="Ribonuclease 3"/>
    <property type="match status" value="1"/>
</dbReference>
<dbReference type="Gene3D" id="3.30.160.20">
    <property type="match status" value="1"/>
</dbReference>
<dbReference type="Gene3D" id="1.10.1520.10">
    <property type="entry name" value="Ribonuclease III domain"/>
    <property type="match status" value="1"/>
</dbReference>
<dbReference type="HAMAP" id="MF_00104">
    <property type="entry name" value="RNase_III"/>
    <property type="match status" value="1"/>
</dbReference>
<dbReference type="InterPro" id="IPR014720">
    <property type="entry name" value="dsRBD_dom"/>
</dbReference>
<dbReference type="InterPro" id="IPR011907">
    <property type="entry name" value="RNase_III"/>
</dbReference>
<dbReference type="InterPro" id="IPR000999">
    <property type="entry name" value="RNase_III_dom"/>
</dbReference>
<dbReference type="InterPro" id="IPR036389">
    <property type="entry name" value="RNase_III_sf"/>
</dbReference>
<dbReference type="NCBIfam" id="TIGR02191">
    <property type="entry name" value="RNaseIII"/>
    <property type="match status" value="1"/>
</dbReference>
<dbReference type="PANTHER" id="PTHR11207:SF0">
    <property type="entry name" value="RIBONUCLEASE 3"/>
    <property type="match status" value="1"/>
</dbReference>
<dbReference type="PANTHER" id="PTHR11207">
    <property type="entry name" value="RIBONUCLEASE III"/>
    <property type="match status" value="1"/>
</dbReference>
<dbReference type="Pfam" id="PF00035">
    <property type="entry name" value="dsrm"/>
    <property type="match status" value="1"/>
</dbReference>
<dbReference type="Pfam" id="PF14622">
    <property type="entry name" value="Ribonucleas_3_3"/>
    <property type="match status" value="1"/>
</dbReference>
<dbReference type="SMART" id="SM00358">
    <property type="entry name" value="DSRM"/>
    <property type="match status" value="1"/>
</dbReference>
<dbReference type="SMART" id="SM00535">
    <property type="entry name" value="RIBOc"/>
    <property type="match status" value="1"/>
</dbReference>
<dbReference type="SUPFAM" id="SSF54768">
    <property type="entry name" value="dsRNA-binding domain-like"/>
    <property type="match status" value="1"/>
</dbReference>
<dbReference type="SUPFAM" id="SSF69065">
    <property type="entry name" value="RNase III domain-like"/>
    <property type="match status" value="1"/>
</dbReference>
<dbReference type="PROSITE" id="PS50137">
    <property type="entry name" value="DS_RBD"/>
    <property type="match status" value="1"/>
</dbReference>
<dbReference type="PROSITE" id="PS00517">
    <property type="entry name" value="RNASE_3_1"/>
    <property type="match status" value="1"/>
</dbReference>
<dbReference type="PROSITE" id="PS50142">
    <property type="entry name" value="RNASE_3_2"/>
    <property type="match status" value="1"/>
</dbReference>
<name>RNC_STRU0</name>
<organism>
    <name type="scientific">Streptococcus uberis (strain ATCC BAA-854 / 0140J)</name>
    <dbReference type="NCBI Taxonomy" id="218495"/>
    <lineage>
        <taxon>Bacteria</taxon>
        <taxon>Bacillati</taxon>
        <taxon>Bacillota</taxon>
        <taxon>Bacilli</taxon>
        <taxon>Lactobacillales</taxon>
        <taxon>Streptococcaceae</taxon>
        <taxon>Streptococcus</taxon>
    </lineage>
</organism>
<sequence>MKNLEALLKSSFAIEFEDKTLLETAFTHTSYANEHRLLNISHNERLEFLGDAVLQLIISEYLFKKYPHKAEGELSKQRSMIVREESLASFSRHCAFEPYIKLGKGEEKSGGRNRDTILGDLFEAFLGALLLDKGVEEVRRFLNQVMIPQVEKGNFEKVNDYKTSLQEILQAKGDTIIDYKVINESGPAHAKQFEVVVLANQVELSKGIGRSKKLAEQNAAENALKALSEE</sequence>